<keyword id="KW-0963">Cytoplasm</keyword>
<keyword id="KW-0539">Nucleus</keyword>
<keyword id="KW-0597">Phosphoprotein</keyword>
<keyword id="KW-1185">Reference proteome</keyword>
<keyword id="KW-0677">Repeat</keyword>
<keyword id="KW-0694">RNA-binding</keyword>
<keyword id="KW-0810">Translation regulation</keyword>
<gene>
    <name type="primary">PAB5</name>
    <name type="ordered locus">At1g71770</name>
    <name type="ORF">F14O23.15</name>
</gene>
<proteinExistence type="evidence at protein level"/>
<reference key="1">
    <citation type="journal article" date="1993" name="Proc. Natl. Acad. Sci. U.S.A.">
        <title>Differential organ-specific expression of three poly(A)-binding-protein genes from Arabidopsis thaliana.</title>
        <authorList>
            <person name="Belostotsky D.A."/>
            <person name="Meagher R.B."/>
        </authorList>
    </citation>
    <scope>NUCLEOTIDE SEQUENCE [GENOMIC DNA]</scope>
    <scope>TISSUE SPECIFICITY</scope>
    <scope>FUNCTION</scope>
    <source>
        <strain>cv. Columbia</strain>
    </source>
</reference>
<reference key="2">
    <citation type="journal article" date="2000" name="Nature">
        <title>Sequence and analysis of chromosome 1 of the plant Arabidopsis thaliana.</title>
        <authorList>
            <person name="Theologis A."/>
            <person name="Ecker J.R."/>
            <person name="Palm C.J."/>
            <person name="Federspiel N.A."/>
            <person name="Kaul S."/>
            <person name="White O."/>
            <person name="Alonso J."/>
            <person name="Altafi H."/>
            <person name="Araujo R."/>
            <person name="Bowman C.L."/>
            <person name="Brooks S.Y."/>
            <person name="Buehler E."/>
            <person name="Chan A."/>
            <person name="Chao Q."/>
            <person name="Chen H."/>
            <person name="Cheuk R.F."/>
            <person name="Chin C.W."/>
            <person name="Chung M.K."/>
            <person name="Conn L."/>
            <person name="Conway A.B."/>
            <person name="Conway A.R."/>
            <person name="Creasy T.H."/>
            <person name="Dewar K."/>
            <person name="Dunn P."/>
            <person name="Etgu P."/>
            <person name="Feldblyum T.V."/>
            <person name="Feng J.-D."/>
            <person name="Fong B."/>
            <person name="Fujii C.Y."/>
            <person name="Gill J.E."/>
            <person name="Goldsmith A.D."/>
            <person name="Haas B."/>
            <person name="Hansen N.F."/>
            <person name="Hughes B."/>
            <person name="Huizar L."/>
            <person name="Hunter J.L."/>
            <person name="Jenkins J."/>
            <person name="Johnson-Hopson C."/>
            <person name="Khan S."/>
            <person name="Khaykin E."/>
            <person name="Kim C.J."/>
            <person name="Koo H.L."/>
            <person name="Kremenetskaia I."/>
            <person name="Kurtz D.B."/>
            <person name="Kwan A."/>
            <person name="Lam B."/>
            <person name="Langin-Hooper S."/>
            <person name="Lee A."/>
            <person name="Lee J.M."/>
            <person name="Lenz C.A."/>
            <person name="Li J.H."/>
            <person name="Li Y.-P."/>
            <person name="Lin X."/>
            <person name="Liu S.X."/>
            <person name="Liu Z.A."/>
            <person name="Luros J.S."/>
            <person name="Maiti R."/>
            <person name="Marziali A."/>
            <person name="Militscher J."/>
            <person name="Miranda M."/>
            <person name="Nguyen M."/>
            <person name="Nierman W.C."/>
            <person name="Osborne B.I."/>
            <person name="Pai G."/>
            <person name="Peterson J."/>
            <person name="Pham P.K."/>
            <person name="Rizzo M."/>
            <person name="Rooney T."/>
            <person name="Rowley D."/>
            <person name="Sakano H."/>
            <person name="Salzberg S.L."/>
            <person name="Schwartz J.R."/>
            <person name="Shinn P."/>
            <person name="Southwick A.M."/>
            <person name="Sun H."/>
            <person name="Tallon L.J."/>
            <person name="Tambunga G."/>
            <person name="Toriumi M.J."/>
            <person name="Town C.D."/>
            <person name="Utterback T."/>
            <person name="Van Aken S."/>
            <person name="Vaysberg M."/>
            <person name="Vysotskaia V.S."/>
            <person name="Walker M."/>
            <person name="Wu D."/>
            <person name="Yu G."/>
            <person name="Fraser C.M."/>
            <person name="Venter J.C."/>
            <person name="Davis R.W."/>
        </authorList>
    </citation>
    <scope>NUCLEOTIDE SEQUENCE [LARGE SCALE GENOMIC DNA]</scope>
    <source>
        <strain>cv. Columbia</strain>
    </source>
</reference>
<reference key="3">
    <citation type="journal article" date="2017" name="Plant J.">
        <title>Araport11: a complete reannotation of the Arabidopsis thaliana reference genome.</title>
        <authorList>
            <person name="Cheng C.Y."/>
            <person name="Krishnakumar V."/>
            <person name="Chan A.P."/>
            <person name="Thibaud-Nissen F."/>
            <person name="Schobel S."/>
            <person name="Town C.D."/>
        </authorList>
    </citation>
    <scope>GENOME REANNOTATION</scope>
    <source>
        <strain>cv. Columbia</strain>
    </source>
</reference>
<reference key="4">
    <citation type="journal article" date="2004" name="Genome Res.">
        <title>Whole genome sequence comparisons and 'full-length' cDNA sequences: a combined approach to evaluate and improve Arabidopsis genome annotation.</title>
        <authorList>
            <person name="Castelli V."/>
            <person name="Aury J.-M."/>
            <person name="Jaillon O."/>
            <person name="Wincker P."/>
            <person name="Clepet C."/>
            <person name="Menard M."/>
            <person name="Cruaud C."/>
            <person name="Quetier F."/>
            <person name="Scarpelli C."/>
            <person name="Schaechter V."/>
            <person name="Temple G."/>
            <person name="Caboche M."/>
            <person name="Weissenbach J."/>
            <person name="Salanoubat M."/>
        </authorList>
    </citation>
    <scope>NUCLEOTIDE SEQUENCE [LARGE SCALE MRNA] OF 540-682</scope>
    <source>
        <strain>cv. Columbia</strain>
    </source>
</reference>
<reference key="5">
    <citation type="journal article" date="1996" name="Plant Cell">
        <title>A pollen-, ovule-, and early embryo-specific poly(A) binding protein from Arabidopsis complements essential functions in yeast.</title>
        <authorList>
            <person name="Belostotsky D.A."/>
            <person name="Meagher R.B."/>
        </authorList>
    </citation>
    <scope>TISSUE SPECIFICITY</scope>
    <scope>FUNCTION</scope>
</reference>
<reference key="6">
    <citation type="journal article" date="2003" name="Genetics">
        <title>Unexpected complexity of poly(A)-binding protein gene families in flowering plants: three conserved lineages that are at least 200 million years old and possible auto- and cross-regulation.</title>
        <authorList>
            <person name="Belostotsky D.A."/>
        </authorList>
    </citation>
    <scope>GENE FAMILY</scope>
</reference>
<reference key="7">
    <citation type="journal article" date="2005" name="Mol. Genet. Genomics">
        <title>Four distinct classes of proteins as interaction partners of the PABC domain of Arabidopsis thaliana Poly(A)-binding proteins.</title>
        <authorList>
            <person name="Bravo J."/>
            <person name="Aguilar-Henonin L."/>
            <person name="Olmedo G."/>
            <person name="Guzman P."/>
        </authorList>
    </citation>
    <scope>TISSUE SPECIFICITY</scope>
</reference>
<reference key="8">
    <citation type="journal article" date="2008" name="J. Proteome Res.">
        <title>Site-specific phosphorylation profiling of Arabidopsis proteins by mass spectrometry and peptide chip analysis.</title>
        <authorList>
            <person name="de la Fuente van Bentem S."/>
            <person name="Anrather D."/>
            <person name="Dohnal I."/>
            <person name="Roitinger E."/>
            <person name="Csaszar E."/>
            <person name="Joore J."/>
            <person name="Buijnink J."/>
            <person name="Carreri A."/>
            <person name="Forzani C."/>
            <person name="Lorkovic Z.J."/>
            <person name="Barta A."/>
            <person name="Lecourieux D."/>
            <person name="Verhounig A."/>
            <person name="Jonak C."/>
            <person name="Hirt H."/>
        </authorList>
    </citation>
    <scope>PHOSPHORYLATION [LARGE SCALE ANALYSIS] AT SER-600</scope>
    <scope>IDENTIFICATION BY MASS SPECTROMETRY [LARGE SCALE ANALYSIS]</scope>
    <source>
        <tissue>Root</tissue>
    </source>
</reference>
<feature type="chain" id="PRO_0000081716" description="Polyadenylate-binding protein 5">
    <location>
        <begin position="1"/>
        <end position="682"/>
    </location>
</feature>
<feature type="domain" description="RRM 1" evidence="2">
    <location>
        <begin position="59"/>
        <end position="136"/>
    </location>
</feature>
<feature type="domain" description="RRM 2" evidence="2">
    <location>
        <begin position="146"/>
        <end position="223"/>
    </location>
</feature>
<feature type="domain" description="RRM 3" evidence="2">
    <location>
        <begin position="239"/>
        <end position="316"/>
    </location>
</feature>
<feature type="domain" description="RRM 4" evidence="2">
    <location>
        <begin position="342"/>
        <end position="419"/>
    </location>
</feature>
<feature type="domain" description="PABC" evidence="3">
    <location>
        <begin position="588"/>
        <end position="665"/>
    </location>
</feature>
<feature type="modified residue" description="Phosphoserine" evidence="8">
    <location>
        <position position="600"/>
    </location>
</feature>
<feature type="sequence conflict" description="In Ref. 1; AAA32832." evidence="7" ref="1">
    <original>A</original>
    <variation>P</variation>
    <location>
        <position position="624"/>
    </location>
</feature>
<sequence length="682" mass="74423">MAAAVASGIAPTTAMVDQVIPNQPTVAAAAPPPFPAVSQVAAVAAAAAAAEALQTHPNSSLYVGDLDPSVNESHLLDLFNQVAPVHNLRVCRDLTHRSLGYAYVNFANPEDASRAMESLNYAPIRDRPIRIMLSNRDPSTRLSGKGNVFIKNLDASIDNKALYETFSSFGTILSCKVAMDVVGRSKGYGFVQFEKEETAQAAIDKLNGMLLNDKQVFVGHFVRRQDRARSESGAVPSFTNVYVKNLPKEITDDELKKTFGKYGDISSAVVMKDQSGNSRSFGFVNFVSPEAAAVAVEKMNGISLGEDVLYVGRAQKKSDREEELRRKFEQERISRFEKLQGSNLYLKNLDDSVNDEKLKEMFSEYGNVTSCKVMMNSQGLSRGFGFVAYSNPEEALLAMKEMNGKMIGRKPLYVALAQRKEERQAHLQSLFTQIRSPGTMSPVPSPMSGFHHHPPGGPMSGPHHPMFIGHNGQGLVPSQPMGYGYQVQFMPGMRPGAGPPNFMMPFPLQRQTQPGPRVGFRRGANNMQQQFQQQQMLQQNASRFMGGAGNRRNGMEASAPQGIIPLPLNASANSHNAPQRSHKPTPLTISKLASDLALASPDKHPRMLGDHLYPLVEQQEPANAAKVTGMLLEMDQAEILHLLESPEALKAKVSEALDVLRRSADPAAVSSVDDQFALSSSE</sequence>
<name>PABP5_ARATH</name>
<evidence type="ECO:0000250" key="1"/>
<evidence type="ECO:0000255" key="2">
    <source>
        <dbReference type="PROSITE-ProRule" id="PRU00176"/>
    </source>
</evidence>
<evidence type="ECO:0000255" key="3">
    <source>
        <dbReference type="PROSITE-ProRule" id="PRU00641"/>
    </source>
</evidence>
<evidence type="ECO:0000269" key="4">
    <source>
    </source>
</evidence>
<evidence type="ECO:0000269" key="5">
    <source>
    </source>
</evidence>
<evidence type="ECO:0000269" key="6">
    <source>
    </source>
</evidence>
<evidence type="ECO:0000305" key="7"/>
<evidence type="ECO:0007744" key="8">
    <source>
    </source>
</evidence>
<comment type="function">
    <text evidence="5 6">Binds the poly(A) tail of mRNA. Appears to be an important mediator of the multiple roles of the poly(A) tail in mRNA biogenesis, stability and translation.</text>
</comment>
<comment type="subcellular location">
    <subcellularLocation>
        <location evidence="1">Cytoplasm</location>
    </subcellularLocation>
    <subcellularLocation>
        <location evidence="1">Nucleus</location>
    </subcellularLocation>
</comment>
<comment type="tissue specificity">
    <text evidence="4 5 6">Expressed predominantly in immature flowers but also at lower levels in mature flowers and siliques. Detected in tapetum, pollen, ovules and developing seeds. Also detected in primary inflorescences and immature siliques.</text>
</comment>
<comment type="miscellaneous">
    <text>A.thaliana contains 8 PABP genes.</text>
</comment>
<comment type="similarity">
    <text evidence="7">Belongs to the polyadenylate-binding protein type-1 family.</text>
</comment>
<comment type="sequence caution" evidence="7">
    <conflict type="erroneous initiation">
        <sequence resource="EMBL-CDS" id="AAA32832"/>
    </conflict>
    <text>Truncated N-terminus.</text>
</comment>
<comment type="sequence caution" evidence="7">
    <conflict type="erroneous initiation">
        <sequence resource="EMBL-CDS" id="AAF43230"/>
    </conflict>
    <text>Truncated N-terminus.</text>
</comment>
<comment type="sequence caution" evidence="7">
    <conflict type="miscellaneous discrepancy">
        <sequence resource="EMBL" id="BX818355"/>
    </conflict>
    <text>Sequencing errors.</text>
</comment>
<accession>Q05196</accession>
<accession>Q9M9G9</accession>
<organism>
    <name type="scientific">Arabidopsis thaliana</name>
    <name type="common">Mouse-ear cress</name>
    <dbReference type="NCBI Taxonomy" id="3702"/>
    <lineage>
        <taxon>Eukaryota</taxon>
        <taxon>Viridiplantae</taxon>
        <taxon>Streptophyta</taxon>
        <taxon>Embryophyta</taxon>
        <taxon>Tracheophyta</taxon>
        <taxon>Spermatophyta</taxon>
        <taxon>Magnoliopsida</taxon>
        <taxon>eudicotyledons</taxon>
        <taxon>Gunneridae</taxon>
        <taxon>Pentapetalae</taxon>
        <taxon>rosids</taxon>
        <taxon>malvids</taxon>
        <taxon>Brassicales</taxon>
        <taxon>Brassicaceae</taxon>
        <taxon>Camelineae</taxon>
        <taxon>Arabidopsis</taxon>
    </lineage>
</organism>
<dbReference type="EMBL" id="M97657">
    <property type="protein sequence ID" value="AAA32832.1"/>
    <property type="status" value="ALT_INIT"/>
    <property type="molecule type" value="Genomic_DNA"/>
</dbReference>
<dbReference type="EMBL" id="AC012654">
    <property type="protein sequence ID" value="AAF43230.1"/>
    <property type="status" value="ALT_INIT"/>
    <property type="molecule type" value="Genomic_DNA"/>
</dbReference>
<dbReference type="EMBL" id="CP002684">
    <property type="protein sequence ID" value="AEE35230.1"/>
    <property type="molecule type" value="Genomic_DNA"/>
</dbReference>
<dbReference type="EMBL" id="CP002684">
    <property type="protein sequence ID" value="AEE35231.1"/>
    <property type="molecule type" value="Genomic_DNA"/>
</dbReference>
<dbReference type="EMBL" id="BX818355">
    <property type="status" value="NOT_ANNOTATED_CDS"/>
    <property type="molecule type" value="mRNA"/>
</dbReference>
<dbReference type="PIR" id="B96740">
    <property type="entry name" value="B96740"/>
</dbReference>
<dbReference type="RefSeq" id="NP_001185373.1">
    <property type="nucleotide sequence ID" value="NM_001198444.1"/>
</dbReference>
<dbReference type="RefSeq" id="NP_177322.2">
    <property type="nucleotide sequence ID" value="NM_105835.2"/>
</dbReference>
<dbReference type="SMR" id="Q05196"/>
<dbReference type="BioGRID" id="28727">
    <property type="interactions" value="9"/>
</dbReference>
<dbReference type="FunCoup" id="Q05196">
    <property type="interactions" value="2692"/>
</dbReference>
<dbReference type="IntAct" id="Q05196">
    <property type="interactions" value="5"/>
</dbReference>
<dbReference type="STRING" id="3702.Q05196"/>
<dbReference type="GlyGen" id="Q05196">
    <property type="glycosylation" value="1 site"/>
</dbReference>
<dbReference type="iPTMnet" id="Q05196"/>
<dbReference type="PaxDb" id="3702-AT1G71770.1"/>
<dbReference type="ProteomicsDB" id="248631"/>
<dbReference type="EnsemblPlants" id="AT1G71770.1">
    <property type="protein sequence ID" value="AT1G71770.1"/>
    <property type="gene ID" value="AT1G71770"/>
</dbReference>
<dbReference type="EnsemblPlants" id="AT1G71770.2">
    <property type="protein sequence ID" value="AT1G71770.2"/>
    <property type="gene ID" value="AT1G71770"/>
</dbReference>
<dbReference type="GeneID" id="843507"/>
<dbReference type="Gramene" id="AT1G71770.1">
    <property type="protein sequence ID" value="AT1G71770.1"/>
    <property type="gene ID" value="AT1G71770"/>
</dbReference>
<dbReference type="Gramene" id="AT1G71770.2">
    <property type="protein sequence ID" value="AT1G71770.2"/>
    <property type="gene ID" value="AT1G71770"/>
</dbReference>
<dbReference type="KEGG" id="ath:AT1G71770"/>
<dbReference type="Araport" id="AT1G71770"/>
<dbReference type="TAIR" id="AT1G71770">
    <property type="gene designation" value="PAB5"/>
</dbReference>
<dbReference type="eggNOG" id="KOG0123">
    <property type="taxonomic scope" value="Eukaryota"/>
</dbReference>
<dbReference type="HOGENOM" id="CLU_012062_22_4_1"/>
<dbReference type="InParanoid" id="Q05196"/>
<dbReference type="OMA" id="NATYSMA"/>
<dbReference type="OrthoDB" id="19742at2759"/>
<dbReference type="PhylomeDB" id="Q05196"/>
<dbReference type="PRO" id="PR:Q05196"/>
<dbReference type="Proteomes" id="UP000006548">
    <property type="component" value="Chromosome 1"/>
</dbReference>
<dbReference type="ExpressionAtlas" id="Q05196">
    <property type="expression patterns" value="baseline and differential"/>
</dbReference>
<dbReference type="GO" id="GO:0005829">
    <property type="term" value="C:cytosol"/>
    <property type="evidence" value="ECO:0007005"/>
    <property type="project" value="TAIR"/>
</dbReference>
<dbReference type="GO" id="GO:0005739">
    <property type="term" value="C:mitochondrion"/>
    <property type="evidence" value="ECO:0007005"/>
    <property type="project" value="TAIR"/>
</dbReference>
<dbReference type="GO" id="GO:0005634">
    <property type="term" value="C:nucleus"/>
    <property type="evidence" value="ECO:0007669"/>
    <property type="project" value="UniProtKB-SubCell"/>
</dbReference>
<dbReference type="GO" id="GO:0008143">
    <property type="term" value="F:poly(A) binding"/>
    <property type="evidence" value="ECO:0000314"/>
    <property type="project" value="TAIR"/>
</dbReference>
<dbReference type="GO" id="GO:0000289">
    <property type="term" value="P:nuclear-transcribed mRNA poly(A) tail shortening"/>
    <property type="evidence" value="ECO:0000316"/>
    <property type="project" value="TAIR"/>
</dbReference>
<dbReference type="GO" id="GO:0006417">
    <property type="term" value="P:regulation of translation"/>
    <property type="evidence" value="ECO:0007669"/>
    <property type="project" value="UniProtKB-KW"/>
</dbReference>
<dbReference type="GO" id="GO:0006413">
    <property type="term" value="P:translational initiation"/>
    <property type="evidence" value="ECO:0000316"/>
    <property type="project" value="TAIR"/>
</dbReference>
<dbReference type="CDD" id="cd12379">
    <property type="entry name" value="RRM2_I_PABPs"/>
    <property type="match status" value="1"/>
</dbReference>
<dbReference type="CDD" id="cd12380">
    <property type="entry name" value="RRM3_I_PABPs"/>
    <property type="match status" value="1"/>
</dbReference>
<dbReference type="CDD" id="cd12381">
    <property type="entry name" value="RRM4_I_PABPs"/>
    <property type="match status" value="1"/>
</dbReference>
<dbReference type="FunFam" id="1.10.1900.10:FF:000003">
    <property type="entry name" value="Polyadenylate-binding protein"/>
    <property type="match status" value="1"/>
</dbReference>
<dbReference type="FunFam" id="3.30.70.330:FF:000285">
    <property type="entry name" value="Polyadenylate-binding protein"/>
    <property type="match status" value="1"/>
</dbReference>
<dbReference type="FunFam" id="3.30.70.330:FF:000648">
    <property type="entry name" value="Polyadenylate-binding protein"/>
    <property type="match status" value="1"/>
</dbReference>
<dbReference type="FunFam" id="3.30.70.330:FF:001206">
    <property type="entry name" value="Polyadenylate-binding protein"/>
    <property type="match status" value="1"/>
</dbReference>
<dbReference type="FunFam" id="3.30.70.330:FF:000590">
    <property type="entry name" value="Polyadenylate-binding protein 5"/>
    <property type="match status" value="1"/>
</dbReference>
<dbReference type="Gene3D" id="3.30.70.330">
    <property type="match status" value="4"/>
</dbReference>
<dbReference type="Gene3D" id="1.10.1900.10">
    <property type="entry name" value="c-terminal domain of poly(a) binding protein"/>
    <property type="match status" value="1"/>
</dbReference>
<dbReference type="InterPro" id="IPR012677">
    <property type="entry name" value="Nucleotide-bd_a/b_plait_sf"/>
</dbReference>
<dbReference type="InterPro" id="IPR036053">
    <property type="entry name" value="PABP-dom"/>
</dbReference>
<dbReference type="InterPro" id="IPR006515">
    <property type="entry name" value="PABP_1234"/>
</dbReference>
<dbReference type="InterPro" id="IPR002004">
    <property type="entry name" value="PABP_HYD_C"/>
</dbReference>
<dbReference type="InterPro" id="IPR035979">
    <property type="entry name" value="RBD_domain_sf"/>
</dbReference>
<dbReference type="InterPro" id="IPR045305">
    <property type="entry name" value="RRM2_I_PABPs"/>
</dbReference>
<dbReference type="InterPro" id="IPR000504">
    <property type="entry name" value="RRM_dom"/>
</dbReference>
<dbReference type="InterPro" id="IPR003954">
    <property type="entry name" value="RRM_dom_euk"/>
</dbReference>
<dbReference type="NCBIfam" id="TIGR01628">
    <property type="entry name" value="PABP-1234"/>
    <property type="match status" value="1"/>
</dbReference>
<dbReference type="PANTHER" id="PTHR24012">
    <property type="entry name" value="RNA BINDING PROTEIN"/>
    <property type="match status" value="1"/>
</dbReference>
<dbReference type="Pfam" id="PF00658">
    <property type="entry name" value="MLLE"/>
    <property type="match status" value="1"/>
</dbReference>
<dbReference type="Pfam" id="PF00076">
    <property type="entry name" value="RRM_1"/>
    <property type="match status" value="4"/>
</dbReference>
<dbReference type="SMART" id="SM00517">
    <property type="entry name" value="PolyA"/>
    <property type="match status" value="1"/>
</dbReference>
<dbReference type="SMART" id="SM00360">
    <property type="entry name" value="RRM"/>
    <property type="match status" value="4"/>
</dbReference>
<dbReference type="SMART" id="SM00361">
    <property type="entry name" value="RRM_1"/>
    <property type="match status" value="4"/>
</dbReference>
<dbReference type="SUPFAM" id="SSF63570">
    <property type="entry name" value="PABC (PABP) domain"/>
    <property type="match status" value="1"/>
</dbReference>
<dbReference type="SUPFAM" id="SSF54928">
    <property type="entry name" value="RNA-binding domain, RBD"/>
    <property type="match status" value="2"/>
</dbReference>
<dbReference type="PROSITE" id="PS51309">
    <property type="entry name" value="PABC"/>
    <property type="match status" value="1"/>
</dbReference>
<dbReference type="PROSITE" id="PS50102">
    <property type="entry name" value="RRM"/>
    <property type="match status" value="4"/>
</dbReference>
<protein>
    <recommendedName>
        <fullName>Polyadenylate-binding protein 5</fullName>
        <shortName>PABP-5</shortName>
        <shortName>Poly(A)-binding protein 5</shortName>
    </recommendedName>
</protein>